<gene>
    <name evidence="3" type="primary">BHLH167</name>
    <name evidence="4" type="ordered locus">At1g10585</name>
    <name evidence="5" type="ORF">T10O24.22</name>
</gene>
<comment type="subcellular location">
    <subcellularLocation>
        <location evidence="1">Nucleus</location>
    </subcellularLocation>
</comment>
<comment type="similarity">
    <text evidence="3">Belongs to the bHLH protein family.</text>
</comment>
<comment type="sequence caution" evidence="3">
    <conflict type="erroneous gene model prediction">
        <sequence resource="EMBL-CDS" id="AAD39582"/>
    </conflict>
</comment>
<sequence length="181" mass="21070">MGRAREIGEGNSSSLREQRNLREKDRRMRMKHLFSILSSHVSPTRKLPVPHLIDQATSYMIQLKENVNYLKEKKRTLLQGELGNLYEGSFLLPKLSIRSRDSTIEMNLIMDLNMKRVMLHELVSIFEEEGAQVMSANLQNLNDRTTYTIIAQAIISRIGIDPSRIEERVRKIIYGYIYFEA</sequence>
<evidence type="ECO:0000255" key="1">
    <source>
        <dbReference type="PROSITE-ProRule" id="PRU00981"/>
    </source>
</evidence>
<evidence type="ECO:0000256" key="2">
    <source>
        <dbReference type="SAM" id="MobiDB-lite"/>
    </source>
</evidence>
<evidence type="ECO:0000305" key="3"/>
<evidence type="ECO:0000312" key="4">
    <source>
        <dbReference type="Araport" id="AT1G10585"/>
    </source>
</evidence>
<evidence type="ECO:0000312" key="5">
    <source>
        <dbReference type="EMBL" id="AAD39582.1"/>
    </source>
</evidence>
<evidence type="ECO:0000312" key="6">
    <source>
        <dbReference type="EMBL" id="BAH19570.1"/>
    </source>
</evidence>
<proteinExistence type="evidence at transcript level"/>
<keyword id="KW-0238">DNA-binding</keyword>
<keyword id="KW-0539">Nucleus</keyword>
<keyword id="KW-1185">Reference proteome</keyword>
<keyword id="KW-0804">Transcription</keyword>
<keyword id="KW-0805">Transcription regulation</keyword>
<reference key="1">
    <citation type="journal article" date="2000" name="Nature">
        <title>Sequence and analysis of chromosome 1 of the plant Arabidopsis thaliana.</title>
        <authorList>
            <person name="Theologis A."/>
            <person name="Ecker J.R."/>
            <person name="Palm C.J."/>
            <person name="Federspiel N.A."/>
            <person name="Kaul S."/>
            <person name="White O."/>
            <person name="Alonso J."/>
            <person name="Altafi H."/>
            <person name="Araujo R."/>
            <person name="Bowman C.L."/>
            <person name="Brooks S.Y."/>
            <person name="Buehler E."/>
            <person name="Chan A."/>
            <person name="Chao Q."/>
            <person name="Chen H."/>
            <person name="Cheuk R.F."/>
            <person name="Chin C.W."/>
            <person name="Chung M.K."/>
            <person name="Conn L."/>
            <person name="Conway A.B."/>
            <person name="Conway A.R."/>
            <person name="Creasy T.H."/>
            <person name="Dewar K."/>
            <person name="Dunn P."/>
            <person name="Etgu P."/>
            <person name="Feldblyum T.V."/>
            <person name="Feng J.-D."/>
            <person name="Fong B."/>
            <person name="Fujii C.Y."/>
            <person name="Gill J.E."/>
            <person name="Goldsmith A.D."/>
            <person name="Haas B."/>
            <person name="Hansen N.F."/>
            <person name="Hughes B."/>
            <person name="Huizar L."/>
            <person name="Hunter J.L."/>
            <person name="Jenkins J."/>
            <person name="Johnson-Hopson C."/>
            <person name="Khan S."/>
            <person name="Khaykin E."/>
            <person name="Kim C.J."/>
            <person name="Koo H.L."/>
            <person name="Kremenetskaia I."/>
            <person name="Kurtz D.B."/>
            <person name="Kwan A."/>
            <person name="Lam B."/>
            <person name="Langin-Hooper S."/>
            <person name="Lee A."/>
            <person name="Lee J.M."/>
            <person name="Lenz C.A."/>
            <person name="Li J.H."/>
            <person name="Li Y.-P."/>
            <person name="Lin X."/>
            <person name="Liu S.X."/>
            <person name="Liu Z.A."/>
            <person name="Luros J.S."/>
            <person name="Maiti R."/>
            <person name="Marziali A."/>
            <person name="Militscher J."/>
            <person name="Miranda M."/>
            <person name="Nguyen M."/>
            <person name="Nierman W.C."/>
            <person name="Osborne B.I."/>
            <person name="Pai G."/>
            <person name="Peterson J."/>
            <person name="Pham P.K."/>
            <person name="Rizzo M."/>
            <person name="Rooney T."/>
            <person name="Rowley D."/>
            <person name="Sakano H."/>
            <person name="Salzberg S.L."/>
            <person name="Schwartz J.R."/>
            <person name="Shinn P."/>
            <person name="Southwick A.M."/>
            <person name="Sun H."/>
            <person name="Tallon L.J."/>
            <person name="Tambunga G."/>
            <person name="Toriumi M.J."/>
            <person name="Town C.D."/>
            <person name="Utterback T."/>
            <person name="Van Aken S."/>
            <person name="Vaysberg M."/>
            <person name="Vysotskaia V.S."/>
            <person name="Walker M."/>
            <person name="Wu D."/>
            <person name="Yu G."/>
            <person name="Fraser C.M."/>
            <person name="Venter J.C."/>
            <person name="Davis R.W."/>
        </authorList>
    </citation>
    <scope>NUCLEOTIDE SEQUENCE [LARGE SCALE GENOMIC DNA]</scope>
    <source>
        <strain>cv. Columbia</strain>
    </source>
</reference>
<reference key="2">
    <citation type="journal article" date="2017" name="Plant J.">
        <title>Araport11: a complete reannotation of the Arabidopsis thaliana reference genome.</title>
        <authorList>
            <person name="Cheng C.Y."/>
            <person name="Krishnakumar V."/>
            <person name="Chan A.P."/>
            <person name="Thibaud-Nissen F."/>
            <person name="Schobel S."/>
            <person name="Town C.D."/>
        </authorList>
    </citation>
    <scope>GENOME REANNOTATION</scope>
    <source>
        <strain>cv. Columbia</strain>
    </source>
</reference>
<reference key="3">
    <citation type="journal article" date="2009" name="DNA Res.">
        <title>Analysis of multiple occurrences of alternative splicing events in Arabidopsis thaliana using novel sequenced full-length cDNAs.</title>
        <authorList>
            <person name="Iida K."/>
            <person name="Fukami-Kobayashi K."/>
            <person name="Toyoda A."/>
            <person name="Sakaki Y."/>
            <person name="Kobayashi M."/>
            <person name="Seki M."/>
            <person name="Shinozaki K."/>
        </authorList>
    </citation>
    <scope>NUCLEOTIDE SEQUENCE [LARGE SCALE MRNA] OF 1-129</scope>
    <source>
        <strain>cv. Columbia</strain>
        <tissue evidence="6">Rosette leaf</tissue>
    </source>
</reference>
<name>BH167_ARATH</name>
<protein>
    <recommendedName>
        <fullName evidence="3">Transcription factor bHLH167</fullName>
    </recommendedName>
    <alternativeName>
        <fullName evidence="3">Basic helix-loop-helix protein 167</fullName>
        <shortName evidence="3">AtbHLH167</shortName>
        <shortName evidence="3">bHLH 167</shortName>
    </alternativeName>
    <alternativeName>
        <fullName evidence="3">bHLH transcription factor bHLH167</fullName>
    </alternativeName>
</protein>
<feature type="chain" id="PRO_0000439395" description="Transcription factor bHLH167">
    <location>
        <begin position="1"/>
        <end position="181"/>
    </location>
</feature>
<feature type="domain" description="bHLH" evidence="1">
    <location>
        <begin position="14"/>
        <end position="63"/>
    </location>
</feature>
<feature type="region of interest" description="Disordered" evidence="2">
    <location>
        <begin position="1"/>
        <end position="22"/>
    </location>
</feature>
<accession>F4I4E1</accession>
<accession>B9DFQ3</accession>
<accession>Q9XIJ2</accession>
<dbReference type="EMBL" id="AC007067">
    <property type="protein sequence ID" value="AAD39582.1"/>
    <property type="status" value="ALT_SEQ"/>
    <property type="molecule type" value="Genomic_DNA"/>
</dbReference>
<dbReference type="EMBL" id="CP002684">
    <property type="protein sequence ID" value="AEE28598.1"/>
    <property type="molecule type" value="Genomic_DNA"/>
</dbReference>
<dbReference type="EMBL" id="AK316861">
    <property type="protein sequence ID" value="BAH19570.1"/>
    <property type="molecule type" value="mRNA"/>
</dbReference>
<dbReference type="RefSeq" id="NP_563873.2">
    <property type="nucleotide sequence ID" value="NM_100934.4"/>
</dbReference>
<dbReference type="SMR" id="F4I4E1"/>
<dbReference type="FunCoup" id="F4I4E1">
    <property type="interactions" value="77"/>
</dbReference>
<dbReference type="IntAct" id="F4I4E1">
    <property type="interactions" value="3"/>
</dbReference>
<dbReference type="STRING" id="3702.F4I4E1"/>
<dbReference type="PaxDb" id="3702-AT1G10585.1"/>
<dbReference type="EnsemblPlants" id="AT1G10585.1">
    <property type="protein sequence ID" value="AT1G10585.1"/>
    <property type="gene ID" value="AT1G10585"/>
</dbReference>
<dbReference type="GeneID" id="837600"/>
<dbReference type="Gramene" id="AT1G10585.1">
    <property type="protein sequence ID" value="AT1G10585.1"/>
    <property type="gene ID" value="AT1G10585"/>
</dbReference>
<dbReference type="KEGG" id="ath:AT1G10585"/>
<dbReference type="Araport" id="AT1G10585"/>
<dbReference type="TAIR" id="AT1G10585"/>
<dbReference type="eggNOG" id="ENOG502STRJ">
    <property type="taxonomic scope" value="Eukaryota"/>
</dbReference>
<dbReference type="HOGENOM" id="CLU_083174_4_0_1"/>
<dbReference type="InParanoid" id="F4I4E1"/>
<dbReference type="OMA" id="MNANTQK"/>
<dbReference type="PRO" id="PR:F4I4E1"/>
<dbReference type="Proteomes" id="UP000006548">
    <property type="component" value="Chromosome 1"/>
</dbReference>
<dbReference type="ExpressionAtlas" id="F4I4E1">
    <property type="expression patterns" value="baseline and differential"/>
</dbReference>
<dbReference type="GO" id="GO:0005737">
    <property type="term" value="C:cytoplasm"/>
    <property type="evidence" value="ECO:0000314"/>
    <property type="project" value="TAIR"/>
</dbReference>
<dbReference type="GO" id="GO:0005634">
    <property type="term" value="C:nucleus"/>
    <property type="evidence" value="ECO:0000314"/>
    <property type="project" value="TAIR"/>
</dbReference>
<dbReference type="GO" id="GO:0003677">
    <property type="term" value="F:DNA binding"/>
    <property type="evidence" value="ECO:0007669"/>
    <property type="project" value="UniProtKB-KW"/>
</dbReference>
<dbReference type="GO" id="GO:0003700">
    <property type="term" value="F:DNA-binding transcription factor activity"/>
    <property type="evidence" value="ECO:0000250"/>
    <property type="project" value="TAIR"/>
</dbReference>
<dbReference type="GO" id="GO:0046983">
    <property type="term" value="F:protein dimerization activity"/>
    <property type="evidence" value="ECO:0007669"/>
    <property type="project" value="InterPro"/>
</dbReference>
<dbReference type="GO" id="GO:0006355">
    <property type="term" value="P:regulation of DNA-templated transcription"/>
    <property type="evidence" value="ECO:0000304"/>
    <property type="project" value="TAIR"/>
</dbReference>
<dbReference type="GO" id="GO:0006357">
    <property type="term" value="P:regulation of transcription by RNA polymerase II"/>
    <property type="evidence" value="ECO:0007669"/>
    <property type="project" value="InterPro"/>
</dbReference>
<dbReference type="CDD" id="cd18914">
    <property type="entry name" value="bHLH_AtORG2_like"/>
    <property type="match status" value="1"/>
</dbReference>
<dbReference type="FunFam" id="4.10.280.10:FF:000153">
    <property type="entry name" value="Transcription factor bHLH167"/>
    <property type="match status" value="1"/>
</dbReference>
<dbReference type="Gene3D" id="4.10.280.10">
    <property type="entry name" value="Helix-loop-helix DNA-binding domain"/>
    <property type="match status" value="1"/>
</dbReference>
<dbReference type="InterPro" id="IPR011598">
    <property type="entry name" value="bHLH_dom"/>
</dbReference>
<dbReference type="InterPro" id="IPR036638">
    <property type="entry name" value="HLH_DNA-bd_sf"/>
</dbReference>
<dbReference type="InterPro" id="IPR015660">
    <property type="entry name" value="MASH1/Ascl1a-like"/>
</dbReference>
<dbReference type="PANTHER" id="PTHR13935">
    <property type="entry name" value="ACHAETE-SCUTE TRANSCRIPTION FACTOR-RELATED"/>
    <property type="match status" value="1"/>
</dbReference>
<dbReference type="PANTHER" id="PTHR13935:SF46">
    <property type="entry name" value="TRANSCRIPTION FACTOR BHLH167-RELATED"/>
    <property type="match status" value="1"/>
</dbReference>
<dbReference type="Pfam" id="PF00010">
    <property type="entry name" value="HLH"/>
    <property type="match status" value="1"/>
</dbReference>
<dbReference type="SUPFAM" id="SSF47459">
    <property type="entry name" value="HLH, helix-loop-helix DNA-binding domain"/>
    <property type="match status" value="1"/>
</dbReference>
<dbReference type="PROSITE" id="PS50888">
    <property type="entry name" value="BHLH"/>
    <property type="match status" value="1"/>
</dbReference>
<organism>
    <name type="scientific">Arabidopsis thaliana</name>
    <name type="common">Mouse-ear cress</name>
    <dbReference type="NCBI Taxonomy" id="3702"/>
    <lineage>
        <taxon>Eukaryota</taxon>
        <taxon>Viridiplantae</taxon>
        <taxon>Streptophyta</taxon>
        <taxon>Embryophyta</taxon>
        <taxon>Tracheophyta</taxon>
        <taxon>Spermatophyta</taxon>
        <taxon>Magnoliopsida</taxon>
        <taxon>eudicotyledons</taxon>
        <taxon>Gunneridae</taxon>
        <taxon>Pentapetalae</taxon>
        <taxon>rosids</taxon>
        <taxon>malvids</taxon>
        <taxon>Brassicales</taxon>
        <taxon>Brassicaceae</taxon>
        <taxon>Camelineae</taxon>
        <taxon>Arabidopsis</taxon>
    </lineage>
</organism>